<accession>Q9ZKF8</accession>
<evidence type="ECO:0000250" key="1"/>
<evidence type="ECO:0000305" key="2"/>
<protein>
    <recommendedName>
        <fullName>Phenylalanine--tRNA ligase beta subunit</fullName>
        <ecNumber>6.1.1.20</ecNumber>
    </recommendedName>
    <alternativeName>
        <fullName>Phenylalanyl-tRNA synthetase beta subunit</fullName>
        <shortName>PheRS</shortName>
    </alternativeName>
</protein>
<name>SYFB_HELPJ</name>
<organism>
    <name type="scientific">Helicobacter pylori (strain J99 / ATCC 700824)</name>
    <name type="common">Campylobacter pylori J99</name>
    <dbReference type="NCBI Taxonomy" id="85963"/>
    <lineage>
        <taxon>Bacteria</taxon>
        <taxon>Pseudomonadati</taxon>
        <taxon>Campylobacterota</taxon>
        <taxon>Epsilonproteobacteria</taxon>
        <taxon>Campylobacterales</taxon>
        <taxon>Helicobacteraceae</taxon>
        <taxon>Helicobacter</taxon>
    </lineage>
</organism>
<feature type="chain" id="PRO_0000126894" description="Phenylalanine--tRNA ligase beta subunit">
    <location>
        <begin position="1"/>
        <end position="764"/>
    </location>
</feature>
<feature type="domain" description="tRNA-binding">
    <location>
        <begin position="38"/>
        <end position="148"/>
    </location>
</feature>
<feature type="domain" description="B5">
    <location>
        <begin position="375"/>
        <end position="455"/>
    </location>
</feature>
<feature type="domain" description="FDX-ACB">
    <location>
        <begin position="673"/>
        <end position="763"/>
    </location>
</feature>
<feature type="binding site" evidence="1">
    <location>
        <position position="433"/>
    </location>
    <ligand>
        <name>Mg(2+)</name>
        <dbReference type="ChEBI" id="CHEBI:18420"/>
        <note>shared with alpha subunit</note>
    </ligand>
</feature>
<feature type="binding site" evidence="1">
    <location>
        <position position="439"/>
    </location>
    <ligand>
        <name>Mg(2+)</name>
        <dbReference type="ChEBI" id="CHEBI:18420"/>
        <note>shared with alpha subunit</note>
    </ligand>
</feature>
<feature type="binding site" evidence="1">
    <location>
        <position position="442"/>
    </location>
    <ligand>
        <name>Mg(2+)</name>
        <dbReference type="ChEBI" id="CHEBI:18420"/>
        <note>shared with alpha subunit</note>
    </ligand>
</feature>
<feature type="binding site" evidence="1">
    <location>
        <position position="443"/>
    </location>
    <ligand>
        <name>Mg(2+)</name>
        <dbReference type="ChEBI" id="CHEBI:18420"/>
        <note>shared with alpha subunit</note>
    </ligand>
</feature>
<reference key="1">
    <citation type="journal article" date="1999" name="Nature">
        <title>Genomic sequence comparison of two unrelated isolates of the human gastric pathogen Helicobacter pylori.</title>
        <authorList>
            <person name="Alm R.A."/>
            <person name="Ling L.-S.L."/>
            <person name="Moir D.T."/>
            <person name="King B.L."/>
            <person name="Brown E.D."/>
            <person name="Doig P.C."/>
            <person name="Smith D.R."/>
            <person name="Noonan B."/>
            <person name="Guild B.C."/>
            <person name="deJonge B.L."/>
            <person name="Carmel G."/>
            <person name="Tummino P.J."/>
            <person name="Caruso A."/>
            <person name="Uria-Nickelsen M."/>
            <person name="Mills D.M."/>
            <person name="Ives C."/>
            <person name="Gibson R."/>
            <person name="Merberg D."/>
            <person name="Mills S.D."/>
            <person name="Jiang Q."/>
            <person name="Taylor D.E."/>
            <person name="Vovis G.F."/>
            <person name="Trust T.J."/>
        </authorList>
    </citation>
    <scope>NUCLEOTIDE SEQUENCE [LARGE SCALE GENOMIC DNA]</scope>
    <source>
        <strain>J99 / ATCC 700824</strain>
    </source>
</reference>
<sequence>MKLSVNDLNVFVNTPKDIAKLCEDLSRLGLEVESCIPCIAPKNVVVGKVLEKAPHKNAEKLSVCQVDVGKEVLPVVCGAKNVAPNQFAPVALKGAIIGSTTIAKTELRGVESHGMICSSIELGFPKINDGILELDESVGELVLGKELHEYAPFNTHVLEISLTPNRGDCLSVLGIAREISAFYHTPLKPIKALNFTPTSDLITLSADENIESHLAYYLICNHSLKTPLNIKLSLAHNNALSENDLNNFIEFSAHFSGVILNAYSLNKTPIDLIIKNDENNLESVYINHQKRSTIVIKHQDQKDLSECLLLEASYTDPVSLSLKLHALKDKTLQKDNALVYRSTRGSNPNLSDGLNFLSAHLKAAILESKQTEHSLKDCALTFQLEDITEILGLVIEAEKIQNILKNLGFKVSTKEPNSKPQILEVIVPNFRHDIKTIQDIAEEILRFVGIDNLVSKPLHCVSSKNSNPHYDTHRFFENLKHKALACGFKEVIHYVFYSKEKQQKLGFEVLEDPLELQNPITTELNTLRTSLVCGLLDASLRNKNLGFKSIALYEKGSVYNSKREEIQKLGFLVSGLQKKESYPHAKGKAWDFYSFAECVSRIIGDFSLEKLTTQTPINHPYQSAKIIQNNEIIGVIAKIHPKVIQELDLFESYYAEIDASKLKRPAMLLKPFSIYPSSVRDLTLIIDENTAFSKIKKALKDAQIPNLSEILPLDIFKESGNTIALSVRCVIHSLEKTLNDEEVNSAVQKALEILEKEFNARLKG</sequence>
<gene>
    <name type="primary">pheT</name>
    <name type="ordered locus">jhp_0979</name>
</gene>
<comment type="catalytic activity">
    <reaction>
        <text>tRNA(Phe) + L-phenylalanine + ATP = L-phenylalanyl-tRNA(Phe) + AMP + diphosphate + H(+)</text>
        <dbReference type="Rhea" id="RHEA:19413"/>
        <dbReference type="Rhea" id="RHEA-COMP:9668"/>
        <dbReference type="Rhea" id="RHEA-COMP:9699"/>
        <dbReference type="ChEBI" id="CHEBI:15378"/>
        <dbReference type="ChEBI" id="CHEBI:30616"/>
        <dbReference type="ChEBI" id="CHEBI:33019"/>
        <dbReference type="ChEBI" id="CHEBI:58095"/>
        <dbReference type="ChEBI" id="CHEBI:78442"/>
        <dbReference type="ChEBI" id="CHEBI:78531"/>
        <dbReference type="ChEBI" id="CHEBI:456215"/>
        <dbReference type="EC" id="6.1.1.20"/>
    </reaction>
</comment>
<comment type="cofactor">
    <cofactor evidence="1">
        <name>Mg(2+)</name>
        <dbReference type="ChEBI" id="CHEBI:18420"/>
    </cofactor>
    <text evidence="1">Binds 2 magnesium ions per tetramer.</text>
</comment>
<comment type="subunit">
    <text evidence="1">Tetramer of two alpha and two beta subunits.</text>
</comment>
<comment type="subcellular location">
    <subcellularLocation>
        <location evidence="1">Cytoplasm</location>
    </subcellularLocation>
</comment>
<comment type="similarity">
    <text evidence="2">Belongs to the phenylalanyl-tRNA synthetase beta subunit family. Type 1 subfamily.</text>
</comment>
<dbReference type="EC" id="6.1.1.20"/>
<dbReference type="EMBL" id="AE001439">
    <property type="protein sequence ID" value="AAD06558.1"/>
    <property type="molecule type" value="Genomic_DNA"/>
</dbReference>
<dbReference type="PIR" id="F71863">
    <property type="entry name" value="F71863"/>
</dbReference>
<dbReference type="RefSeq" id="WP_000778290.1">
    <property type="nucleotide sequence ID" value="NC_000921.1"/>
</dbReference>
<dbReference type="SMR" id="Q9ZKF8"/>
<dbReference type="IntAct" id="Q9ZKF8">
    <property type="interactions" value="1"/>
</dbReference>
<dbReference type="KEGG" id="hpj:jhp_0979"/>
<dbReference type="PATRIC" id="fig|85963.30.peg.1612"/>
<dbReference type="eggNOG" id="COG0072">
    <property type="taxonomic scope" value="Bacteria"/>
</dbReference>
<dbReference type="eggNOG" id="COG0073">
    <property type="taxonomic scope" value="Bacteria"/>
</dbReference>
<dbReference type="Proteomes" id="UP000000804">
    <property type="component" value="Chromosome"/>
</dbReference>
<dbReference type="GO" id="GO:0009328">
    <property type="term" value="C:phenylalanine-tRNA ligase complex"/>
    <property type="evidence" value="ECO:0007669"/>
    <property type="project" value="TreeGrafter"/>
</dbReference>
<dbReference type="GO" id="GO:0005524">
    <property type="term" value="F:ATP binding"/>
    <property type="evidence" value="ECO:0007669"/>
    <property type="project" value="UniProtKB-UniRule"/>
</dbReference>
<dbReference type="GO" id="GO:0000287">
    <property type="term" value="F:magnesium ion binding"/>
    <property type="evidence" value="ECO:0007669"/>
    <property type="project" value="UniProtKB-UniRule"/>
</dbReference>
<dbReference type="GO" id="GO:0004826">
    <property type="term" value="F:phenylalanine-tRNA ligase activity"/>
    <property type="evidence" value="ECO:0007669"/>
    <property type="project" value="UniProtKB-UniRule"/>
</dbReference>
<dbReference type="GO" id="GO:0000049">
    <property type="term" value="F:tRNA binding"/>
    <property type="evidence" value="ECO:0007669"/>
    <property type="project" value="UniProtKB-KW"/>
</dbReference>
<dbReference type="GO" id="GO:0006432">
    <property type="term" value="P:phenylalanyl-tRNA aminoacylation"/>
    <property type="evidence" value="ECO:0007669"/>
    <property type="project" value="UniProtKB-UniRule"/>
</dbReference>
<dbReference type="CDD" id="cd00769">
    <property type="entry name" value="PheRS_beta_core"/>
    <property type="match status" value="1"/>
</dbReference>
<dbReference type="CDD" id="cd02796">
    <property type="entry name" value="tRNA_bind_bactPheRS"/>
    <property type="match status" value="1"/>
</dbReference>
<dbReference type="FunFam" id="3.30.930.10:FF:000185">
    <property type="entry name" value="Phenylalanine--tRNA ligase beta subunit"/>
    <property type="match status" value="1"/>
</dbReference>
<dbReference type="Gene3D" id="3.30.56.10">
    <property type="match status" value="2"/>
</dbReference>
<dbReference type="Gene3D" id="3.30.930.10">
    <property type="entry name" value="Bira Bifunctional Protein, Domain 2"/>
    <property type="match status" value="1"/>
</dbReference>
<dbReference type="Gene3D" id="3.30.70.380">
    <property type="entry name" value="Ferrodoxin-fold anticodon-binding domain"/>
    <property type="match status" value="1"/>
</dbReference>
<dbReference type="Gene3D" id="2.40.50.140">
    <property type="entry name" value="Nucleic acid-binding proteins"/>
    <property type="match status" value="1"/>
</dbReference>
<dbReference type="HAMAP" id="MF_00283">
    <property type="entry name" value="Phe_tRNA_synth_beta1"/>
    <property type="match status" value="1"/>
</dbReference>
<dbReference type="InterPro" id="IPR045864">
    <property type="entry name" value="aa-tRNA-synth_II/BPL/LPL"/>
</dbReference>
<dbReference type="InterPro" id="IPR009061">
    <property type="entry name" value="DNA-bd_dom_put_sf"/>
</dbReference>
<dbReference type="InterPro" id="IPR005121">
    <property type="entry name" value="Fdx_antiC-bd"/>
</dbReference>
<dbReference type="InterPro" id="IPR036690">
    <property type="entry name" value="Fdx_antiC-bd_sf"/>
</dbReference>
<dbReference type="InterPro" id="IPR012340">
    <property type="entry name" value="NA-bd_OB-fold"/>
</dbReference>
<dbReference type="InterPro" id="IPR045060">
    <property type="entry name" value="Phe-tRNA-ligase_IIc_bsu"/>
</dbReference>
<dbReference type="InterPro" id="IPR004532">
    <property type="entry name" value="Phe-tRNA-ligase_IIc_bsu_bact"/>
</dbReference>
<dbReference type="InterPro" id="IPR041616">
    <property type="entry name" value="PheRS_beta_core"/>
</dbReference>
<dbReference type="InterPro" id="IPR002547">
    <property type="entry name" value="tRNA-bd_dom"/>
</dbReference>
<dbReference type="InterPro" id="IPR033714">
    <property type="entry name" value="tRNA_bind_bactPheRS"/>
</dbReference>
<dbReference type="InterPro" id="IPR005147">
    <property type="entry name" value="tRNA_synthase_B5-dom"/>
</dbReference>
<dbReference type="NCBIfam" id="TIGR00472">
    <property type="entry name" value="pheT_bact"/>
    <property type="match status" value="1"/>
</dbReference>
<dbReference type="NCBIfam" id="NF045760">
    <property type="entry name" value="YtpR"/>
    <property type="match status" value="1"/>
</dbReference>
<dbReference type="PANTHER" id="PTHR10947:SF0">
    <property type="entry name" value="PHENYLALANINE--TRNA LIGASE BETA SUBUNIT"/>
    <property type="match status" value="1"/>
</dbReference>
<dbReference type="PANTHER" id="PTHR10947">
    <property type="entry name" value="PHENYLALANYL-TRNA SYNTHETASE BETA CHAIN AND LEUCINE-RICH REPEAT-CONTAINING PROTEIN 47"/>
    <property type="match status" value="1"/>
</dbReference>
<dbReference type="Pfam" id="PF03484">
    <property type="entry name" value="B5"/>
    <property type="match status" value="1"/>
</dbReference>
<dbReference type="Pfam" id="PF03147">
    <property type="entry name" value="FDX-ACB"/>
    <property type="match status" value="1"/>
</dbReference>
<dbReference type="Pfam" id="PF01588">
    <property type="entry name" value="tRNA_bind"/>
    <property type="match status" value="1"/>
</dbReference>
<dbReference type="Pfam" id="PF17759">
    <property type="entry name" value="tRNA_synthFbeta"/>
    <property type="match status" value="1"/>
</dbReference>
<dbReference type="SMART" id="SM00874">
    <property type="entry name" value="B5"/>
    <property type="match status" value="1"/>
</dbReference>
<dbReference type="SMART" id="SM00896">
    <property type="entry name" value="FDX-ACB"/>
    <property type="match status" value="1"/>
</dbReference>
<dbReference type="SUPFAM" id="SSF54991">
    <property type="entry name" value="Anticodon-binding domain of PheRS"/>
    <property type="match status" value="1"/>
</dbReference>
<dbReference type="SUPFAM" id="SSF55681">
    <property type="entry name" value="Class II aaRS and biotin synthetases"/>
    <property type="match status" value="1"/>
</dbReference>
<dbReference type="SUPFAM" id="SSF50249">
    <property type="entry name" value="Nucleic acid-binding proteins"/>
    <property type="match status" value="1"/>
</dbReference>
<dbReference type="SUPFAM" id="SSF46955">
    <property type="entry name" value="Putative DNA-binding domain"/>
    <property type="match status" value="1"/>
</dbReference>
<dbReference type="PROSITE" id="PS51483">
    <property type="entry name" value="B5"/>
    <property type="match status" value="1"/>
</dbReference>
<dbReference type="PROSITE" id="PS51447">
    <property type="entry name" value="FDX_ACB"/>
    <property type="match status" value="1"/>
</dbReference>
<dbReference type="PROSITE" id="PS50886">
    <property type="entry name" value="TRBD"/>
    <property type="match status" value="1"/>
</dbReference>
<keyword id="KW-0030">Aminoacyl-tRNA synthetase</keyword>
<keyword id="KW-0067">ATP-binding</keyword>
<keyword id="KW-0963">Cytoplasm</keyword>
<keyword id="KW-0436">Ligase</keyword>
<keyword id="KW-0460">Magnesium</keyword>
<keyword id="KW-0479">Metal-binding</keyword>
<keyword id="KW-0547">Nucleotide-binding</keyword>
<keyword id="KW-0648">Protein biosynthesis</keyword>
<keyword id="KW-0694">RNA-binding</keyword>
<keyword id="KW-0820">tRNA-binding</keyword>
<proteinExistence type="inferred from homology"/>